<reference key="1">
    <citation type="journal article" date="2011" name="PLoS Genet.">
        <title>Genomic analysis of the necrotrophic fungal pathogens Sclerotinia sclerotiorum and Botrytis cinerea.</title>
        <authorList>
            <person name="Amselem J."/>
            <person name="Cuomo C.A."/>
            <person name="van Kan J.A.L."/>
            <person name="Viaud M."/>
            <person name="Benito E.P."/>
            <person name="Couloux A."/>
            <person name="Coutinho P.M."/>
            <person name="de Vries R.P."/>
            <person name="Dyer P.S."/>
            <person name="Fillinger S."/>
            <person name="Fournier E."/>
            <person name="Gout L."/>
            <person name="Hahn M."/>
            <person name="Kohn L."/>
            <person name="Lapalu N."/>
            <person name="Plummer K.M."/>
            <person name="Pradier J.-M."/>
            <person name="Quevillon E."/>
            <person name="Sharon A."/>
            <person name="Simon A."/>
            <person name="ten Have A."/>
            <person name="Tudzynski B."/>
            <person name="Tudzynski P."/>
            <person name="Wincker P."/>
            <person name="Andrew M."/>
            <person name="Anthouard V."/>
            <person name="Beever R.E."/>
            <person name="Beffa R."/>
            <person name="Benoit I."/>
            <person name="Bouzid O."/>
            <person name="Brault B."/>
            <person name="Chen Z."/>
            <person name="Choquer M."/>
            <person name="Collemare J."/>
            <person name="Cotton P."/>
            <person name="Danchin E.G."/>
            <person name="Da Silva C."/>
            <person name="Gautier A."/>
            <person name="Giraud C."/>
            <person name="Giraud T."/>
            <person name="Gonzalez C."/>
            <person name="Grossetete S."/>
            <person name="Gueldener U."/>
            <person name="Henrissat B."/>
            <person name="Howlett B.J."/>
            <person name="Kodira C."/>
            <person name="Kretschmer M."/>
            <person name="Lappartient A."/>
            <person name="Leroch M."/>
            <person name="Levis C."/>
            <person name="Mauceli E."/>
            <person name="Neuveglise C."/>
            <person name="Oeser B."/>
            <person name="Pearson M."/>
            <person name="Poulain J."/>
            <person name="Poussereau N."/>
            <person name="Quesneville H."/>
            <person name="Rascle C."/>
            <person name="Schumacher J."/>
            <person name="Segurens B."/>
            <person name="Sexton A."/>
            <person name="Silva E."/>
            <person name="Sirven C."/>
            <person name="Soanes D.M."/>
            <person name="Talbot N.J."/>
            <person name="Templeton M."/>
            <person name="Yandava C."/>
            <person name="Yarden O."/>
            <person name="Zeng Q."/>
            <person name="Rollins J.A."/>
            <person name="Lebrun M.-H."/>
            <person name="Dickman M."/>
        </authorList>
    </citation>
    <scope>NUCLEOTIDE SEQUENCE [LARGE SCALE GENOMIC DNA]</scope>
    <source>
        <strain>B05.10</strain>
    </source>
</reference>
<reference key="2">
    <citation type="journal article" date="2012" name="Eukaryot. Cell">
        <title>Genome update of Botrytis cinerea strains B05.10 and T4.</title>
        <authorList>
            <person name="Staats M."/>
            <person name="van Kan J.A.L."/>
        </authorList>
    </citation>
    <scope>NUCLEOTIDE SEQUENCE [LARGE SCALE GENOMIC DNA]</scope>
    <scope>GENOME REANNOTATION</scope>
    <source>
        <strain>B05.10</strain>
    </source>
</reference>
<reference key="3">
    <citation type="journal article" date="2017" name="Mol. Plant Pathol.">
        <title>A gapless genome sequence of the fungus Botrytis cinerea.</title>
        <authorList>
            <person name="van Kan J.A.L."/>
            <person name="Stassen J.H.M."/>
            <person name="Mosbach A."/>
            <person name="van der Lee T.A.J."/>
            <person name="Faino L."/>
            <person name="Farmer A.D."/>
            <person name="Papasotiriou D.G."/>
            <person name="Zhou S."/>
            <person name="Seidl M.F."/>
            <person name="Cottam E."/>
            <person name="Edel D."/>
            <person name="Hahn M."/>
            <person name="Schwartz D.C."/>
            <person name="Dietrich R.A."/>
            <person name="Widdison S."/>
            <person name="Scalliet G."/>
        </authorList>
    </citation>
    <scope>NUCLEOTIDE SEQUENCE [LARGE SCALE GENOMIC DNA]</scope>
    <scope>GENOME REANNOTATION</scope>
    <source>
        <strain>B05.10</strain>
    </source>
</reference>
<organism>
    <name type="scientific">Botryotinia fuckeliana (strain B05.10)</name>
    <name type="common">Noble rot fungus</name>
    <name type="synonym">Botrytis cinerea</name>
    <dbReference type="NCBI Taxonomy" id="332648"/>
    <lineage>
        <taxon>Eukaryota</taxon>
        <taxon>Fungi</taxon>
        <taxon>Dikarya</taxon>
        <taxon>Ascomycota</taxon>
        <taxon>Pezizomycotina</taxon>
        <taxon>Leotiomycetes</taxon>
        <taxon>Helotiales</taxon>
        <taxon>Sclerotiniaceae</taxon>
        <taxon>Botrytis</taxon>
    </lineage>
</organism>
<name>NOP9_BOTFB</name>
<sequence length="791" mass="87141">MPKENKHARGRRDTLKRKREENLDREEDHDNDSQDLKKRRSSQIEDEASFRALDNDQTLSSFPAATGTNAIEVADRPYYGLLEDEEQEYFRRADELLELNDFPSDEERSLFLANVYREAKGKELKIACSQSCSRLMERLILLSTPQQKKKLFSQFAGNFPHLVSHRFASHCCETLFIQSASIVTEELTGEEKKEEKKVADVKADAEDGEEGKEDEITESMESLFLATLDELEGQLSSLLTDRFASHTLRVLLIILSGRPLEKSSTKSLLQSKKKEKVGINGLDTAPTEFSLNKRTVPESFLWAIEKIISDTIASMDRAFIQVLVGHPTGNPCLQLLLELELTNPSSKKGGNSEQKTLISTLLPDDITVEGSQSAIFVNGIVYDQIGSRVLETIMTHSPGKLFKQIYRAIFKDRIAGLARNEIASYVVIRVLNRLSKEDLEEAITEISPQIEGLVGRQRTNIIKVLLERCQVRRASTEALTKSIADAYGSDKNELILKMADISLETLTLATAPPPAADDDKPAPVAVLPKPSPSQLHGSLLAQAMLKIPGPPAQLIQSSLLALPTSTILALSLYPTTTHIIQASLLPSPPNTPSNLLFRRKLINSIISPPAGATSTPQPPIITLSLSSAGTHILDSLLHTTTTPTSTSSASLFSLCERIAMSLMPYEPLLRDSWTGRIVWRNWSMDLFKRRRADWVKRVKSGDTQGKSNIQSQVVLKSQDGNANAVVGKEILGDGIGKPHGKGKGGEKEIGGERQKSAIELAREKFAAQKLASGKLKTIPLKGFKATGANAI</sequence>
<evidence type="ECO:0000250" key="1"/>
<evidence type="ECO:0000256" key="2">
    <source>
        <dbReference type="SAM" id="MobiDB-lite"/>
    </source>
</evidence>
<evidence type="ECO:0000305" key="3"/>
<comment type="function">
    <text evidence="1">RNA-binding nucleolar protein required for pre-rRNA processing. Involved in production of 18S rRNA and assembly of small ribosomal subunit (By similarity).</text>
</comment>
<comment type="subcellular location">
    <subcellularLocation>
        <location evidence="1">Nucleus</location>
        <location evidence="1">Nucleolus</location>
    </subcellularLocation>
</comment>
<comment type="similarity">
    <text evidence="3">Belongs to the NOP9 family.</text>
</comment>
<keyword id="KW-0539">Nucleus</keyword>
<keyword id="KW-1185">Reference proteome</keyword>
<keyword id="KW-0677">Repeat</keyword>
<keyword id="KW-0690">Ribosome biogenesis</keyword>
<keyword id="KW-0698">rRNA processing</keyword>
<proteinExistence type="inferred from homology"/>
<feature type="chain" id="PRO_0000407802" description="Nucleolar protein 9">
    <location>
        <begin position="1"/>
        <end position="791"/>
    </location>
</feature>
<feature type="repeat" description="Pumilio 1">
    <location>
        <begin position="118"/>
        <end position="153"/>
    </location>
</feature>
<feature type="repeat" description="Pumilio 2">
    <location>
        <begin position="154"/>
        <end position="189"/>
    </location>
</feature>
<feature type="repeat" description="Pumilio 3">
    <location>
        <begin position="230"/>
        <end position="270"/>
    </location>
</feature>
<feature type="repeat" description="Pumilio 4">
    <location>
        <begin position="372"/>
        <end position="407"/>
    </location>
</feature>
<feature type="repeat" description="Pumilio 5">
    <location>
        <begin position="408"/>
        <end position="445"/>
    </location>
</feature>
<feature type="repeat" description="Pumilio 6">
    <location>
        <begin position="614"/>
        <end position="653"/>
    </location>
</feature>
<feature type="region of interest" description="Disordered" evidence="2">
    <location>
        <begin position="1"/>
        <end position="52"/>
    </location>
</feature>
<feature type="region of interest" description="Disordered" evidence="2">
    <location>
        <begin position="193"/>
        <end position="213"/>
    </location>
</feature>
<feature type="compositionally biased region" description="Basic and acidic residues" evidence="2">
    <location>
        <begin position="1"/>
        <end position="36"/>
    </location>
</feature>
<feature type="compositionally biased region" description="Basic and acidic residues" evidence="2">
    <location>
        <begin position="193"/>
        <end position="205"/>
    </location>
</feature>
<dbReference type="EMBL" id="CP009806">
    <property type="protein sequence ID" value="ATZ47661.1"/>
    <property type="molecule type" value="Genomic_DNA"/>
</dbReference>
<dbReference type="SMR" id="A6S374"/>
<dbReference type="EnsemblFungi" id="Bcin02g09180.1">
    <property type="protein sequence ID" value="Bcin02p09180.1"/>
    <property type="gene ID" value="Bcin02g09180"/>
</dbReference>
<dbReference type="GeneID" id="5434890"/>
<dbReference type="KEGG" id="bfu:BCIN_02g09180"/>
<dbReference type="VEuPathDB" id="FungiDB:Bcin02g09180"/>
<dbReference type="OMA" id="HHLVRNF"/>
<dbReference type="OrthoDB" id="392571at2759"/>
<dbReference type="Proteomes" id="UP000001798">
    <property type="component" value="Chromosome bcin02"/>
</dbReference>
<dbReference type="GO" id="GO:0030686">
    <property type="term" value="C:90S preribosome"/>
    <property type="evidence" value="ECO:0007669"/>
    <property type="project" value="TreeGrafter"/>
</dbReference>
<dbReference type="GO" id="GO:0005730">
    <property type="term" value="C:nucleolus"/>
    <property type="evidence" value="ECO:0007669"/>
    <property type="project" value="UniProtKB-SubCell"/>
</dbReference>
<dbReference type="GO" id="GO:0030688">
    <property type="term" value="C:preribosome, small subunit precursor"/>
    <property type="evidence" value="ECO:0007669"/>
    <property type="project" value="TreeGrafter"/>
</dbReference>
<dbReference type="GO" id="GO:0003723">
    <property type="term" value="F:RNA binding"/>
    <property type="evidence" value="ECO:0007669"/>
    <property type="project" value="InterPro"/>
</dbReference>
<dbReference type="GO" id="GO:0000480">
    <property type="term" value="P:endonucleolytic cleavage in 5'-ETS of tricistronic rRNA transcript (SSU-rRNA, 5.8S rRNA, LSU-rRNA)"/>
    <property type="evidence" value="ECO:0007669"/>
    <property type="project" value="TreeGrafter"/>
</dbReference>
<dbReference type="GO" id="GO:0000447">
    <property type="term" value="P:endonucleolytic cleavage in ITS1 to separate SSU-rRNA from 5.8S rRNA and LSU-rRNA from tricistronic rRNA transcript (SSU-rRNA, 5.8S rRNA, LSU-rRNA)"/>
    <property type="evidence" value="ECO:0007669"/>
    <property type="project" value="TreeGrafter"/>
</dbReference>
<dbReference type="GO" id="GO:0000472">
    <property type="term" value="P:endonucleolytic cleavage to generate mature 5'-end of SSU-rRNA from (SSU-rRNA, 5.8S rRNA, LSU-rRNA)"/>
    <property type="evidence" value="ECO:0007669"/>
    <property type="project" value="TreeGrafter"/>
</dbReference>
<dbReference type="GO" id="GO:0000056">
    <property type="term" value="P:ribosomal small subunit export from nucleus"/>
    <property type="evidence" value="ECO:0007669"/>
    <property type="project" value="TreeGrafter"/>
</dbReference>
<dbReference type="Gene3D" id="1.25.10.10">
    <property type="entry name" value="Leucine-rich Repeat Variant"/>
    <property type="match status" value="2"/>
</dbReference>
<dbReference type="InterPro" id="IPR011989">
    <property type="entry name" value="ARM-like"/>
</dbReference>
<dbReference type="InterPro" id="IPR016024">
    <property type="entry name" value="ARM-type_fold"/>
</dbReference>
<dbReference type="InterPro" id="IPR040000">
    <property type="entry name" value="NOP9"/>
</dbReference>
<dbReference type="InterPro" id="IPR001313">
    <property type="entry name" value="Pumilio_RNA-bd_rpt"/>
</dbReference>
<dbReference type="PANTHER" id="PTHR13102">
    <property type="entry name" value="NUCLEOLAR PROTEIN 9"/>
    <property type="match status" value="1"/>
</dbReference>
<dbReference type="PANTHER" id="PTHR13102:SF0">
    <property type="entry name" value="NUCLEOLAR PROTEIN 9"/>
    <property type="match status" value="1"/>
</dbReference>
<dbReference type="Pfam" id="PF22493">
    <property type="entry name" value="PUF_NOP9"/>
    <property type="match status" value="1"/>
</dbReference>
<dbReference type="SMART" id="SM00025">
    <property type="entry name" value="Pumilio"/>
    <property type="match status" value="5"/>
</dbReference>
<dbReference type="SUPFAM" id="SSF48371">
    <property type="entry name" value="ARM repeat"/>
    <property type="match status" value="1"/>
</dbReference>
<dbReference type="PROSITE" id="PS50302">
    <property type="entry name" value="PUM"/>
    <property type="match status" value="5"/>
</dbReference>
<protein>
    <recommendedName>
        <fullName>Nucleolar protein 9</fullName>
    </recommendedName>
    <alternativeName>
        <fullName>Pumilio domain-containing protein NOP9</fullName>
    </alternativeName>
</protein>
<gene>
    <name type="primary">NOP9</name>
    <name type="ORF">BC1G_06925</name>
    <name type="ORF">BCIN_02g09180</name>
</gene>
<accession>A6S374</accession>
<accession>A0A384JB36</accession>